<sequence length="118" mass="14019">MALGGRSFRSKKQQLAYDRSFAGRYQKLLSKNPFIFFGLPFCGMMVLGSYWLAGISQVKFDRDDQKVQEMNEEEILKMKHGKREFDIKEEYYRLQGLAEEDWEPKRVERFKGESDNVF</sequence>
<reference key="1">
    <citation type="journal article" date="2004" name="Nature">
        <title>Genome evolution in yeasts.</title>
        <authorList>
            <person name="Dujon B."/>
            <person name="Sherman D."/>
            <person name="Fischer G."/>
            <person name="Durrens P."/>
            <person name="Casaregola S."/>
            <person name="Lafontaine I."/>
            <person name="de Montigny J."/>
            <person name="Marck C."/>
            <person name="Neuveglise C."/>
            <person name="Talla E."/>
            <person name="Goffard N."/>
            <person name="Frangeul L."/>
            <person name="Aigle M."/>
            <person name="Anthouard V."/>
            <person name="Babour A."/>
            <person name="Barbe V."/>
            <person name="Barnay S."/>
            <person name="Blanchin S."/>
            <person name="Beckerich J.-M."/>
            <person name="Beyne E."/>
            <person name="Bleykasten C."/>
            <person name="Boisrame A."/>
            <person name="Boyer J."/>
            <person name="Cattolico L."/>
            <person name="Confanioleri F."/>
            <person name="de Daruvar A."/>
            <person name="Despons L."/>
            <person name="Fabre E."/>
            <person name="Fairhead C."/>
            <person name="Ferry-Dumazet H."/>
            <person name="Groppi A."/>
            <person name="Hantraye F."/>
            <person name="Hennequin C."/>
            <person name="Jauniaux N."/>
            <person name="Joyet P."/>
            <person name="Kachouri R."/>
            <person name="Kerrest A."/>
            <person name="Koszul R."/>
            <person name="Lemaire M."/>
            <person name="Lesur I."/>
            <person name="Ma L."/>
            <person name="Muller H."/>
            <person name="Nicaud J.-M."/>
            <person name="Nikolski M."/>
            <person name="Oztas S."/>
            <person name="Ozier-Kalogeropoulos O."/>
            <person name="Pellenz S."/>
            <person name="Potier S."/>
            <person name="Richard G.-F."/>
            <person name="Straub M.-L."/>
            <person name="Suleau A."/>
            <person name="Swennen D."/>
            <person name="Tekaia F."/>
            <person name="Wesolowski-Louvel M."/>
            <person name="Westhof E."/>
            <person name="Wirth B."/>
            <person name="Zeniou-Meyer M."/>
            <person name="Zivanovic Y."/>
            <person name="Bolotin-Fukuhara M."/>
            <person name="Thierry A."/>
            <person name="Bouchier C."/>
            <person name="Caudron B."/>
            <person name="Scarpelli C."/>
            <person name="Gaillardin C."/>
            <person name="Weissenbach J."/>
            <person name="Wincker P."/>
            <person name="Souciet J.-L."/>
        </authorList>
    </citation>
    <scope>NUCLEOTIDE SEQUENCE [LARGE SCALE GENOMIC DNA]</scope>
    <source>
        <strain>ATCC 2001 / BCRC 20586 / JCM 3761 / NBRC 0622 / NRRL Y-65 / CBS 138</strain>
    </source>
</reference>
<comment type="function">
    <text evidence="1">Required for the assembly of the mitochondrial respiratory chain complex IV (CIV), also known as cytochrome c oxidase. May participate in merging the COX1 and COX2 assembly lines.</text>
</comment>
<comment type="subcellular location">
    <subcellularLocation>
        <location evidence="1">Mitochondrion inner membrane</location>
        <topology evidence="1">Single-pass membrane protein</topology>
    </subcellularLocation>
</comment>
<comment type="similarity">
    <text evidence="3">Belongs to the COX16 family.</text>
</comment>
<dbReference type="EMBL" id="CR380950">
    <property type="protein sequence ID" value="CAG58462.1"/>
    <property type="molecule type" value="Genomic_DNA"/>
</dbReference>
<dbReference type="RefSeq" id="XP_445551.1">
    <property type="nucleotide sequence ID" value="XM_445551.1"/>
</dbReference>
<dbReference type="SMR" id="Q6FW43"/>
<dbReference type="FunCoup" id="Q6FW43">
    <property type="interactions" value="155"/>
</dbReference>
<dbReference type="STRING" id="284593.Q6FW43"/>
<dbReference type="EnsemblFungi" id="CAGL0D03102g-T">
    <property type="protein sequence ID" value="CAGL0D03102g-T-p1"/>
    <property type="gene ID" value="CAGL0D03102g"/>
</dbReference>
<dbReference type="KEGG" id="cgr:2886982"/>
<dbReference type="CGD" id="CAL0128271">
    <property type="gene designation" value="CAGL0D03102g"/>
</dbReference>
<dbReference type="VEuPathDB" id="FungiDB:B1J91_D03102g"/>
<dbReference type="VEuPathDB" id="FungiDB:CAGL0D03102g"/>
<dbReference type="eggNOG" id="ENOG502S9GT">
    <property type="taxonomic scope" value="Eukaryota"/>
</dbReference>
<dbReference type="HOGENOM" id="CLU_131611_2_0_1"/>
<dbReference type="InParanoid" id="Q6FW43"/>
<dbReference type="OMA" id="VNMKDEY"/>
<dbReference type="Proteomes" id="UP000002428">
    <property type="component" value="Chromosome D"/>
</dbReference>
<dbReference type="GO" id="GO:0005743">
    <property type="term" value="C:mitochondrial inner membrane"/>
    <property type="evidence" value="ECO:0007669"/>
    <property type="project" value="UniProtKB-SubCell"/>
</dbReference>
<dbReference type="GO" id="GO:0033617">
    <property type="term" value="P:mitochondrial cytochrome c oxidase assembly"/>
    <property type="evidence" value="ECO:0007669"/>
    <property type="project" value="EnsemblFungi"/>
</dbReference>
<dbReference type="InterPro" id="IPR020164">
    <property type="entry name" value="Cyt_c_Oxase_assmbl_COX16"/>
</dbReference>
<dbReference type="PANTHER" id="PTHR17130:SF14">
    <property type="entry name" value="CYTOCHROME C OXIDASE ASSEMBLY PROTEIN COX16 HOMOLOG, MITOCHONDRIAL"/>
    <property type="match status" value="1"/>
</dbReference>
<dbReference type="PANTHER" id="PTHR17130">
    <property type="entry name" value="MITOCHONDRIAL OUTER MEMBRANE PROTEIN 25"/>
    <property type="match status" value="1"/>
</dbReference>
<dbReference type="Pfam" id="PF14138">
    <property type="entry name" value="COX16"/>
    <property type="match status" value="1"/>
</dbReference>
<feature type="transit peptide" description="Mitochondrion" evidence="2">
    <location>
        <begin position="1"/>
        <end position="28"/>
    </location>
</feature>
<feature type="chain" id="PRO_0000280643" description="Cytochrome c oxidase assembly protein COX16, mitochondrial">
    <location>
        <begin position="29"/>
        <end position="118"/>
    </location>
</feature>
<feature type="transmembrane region" description="Helical" evidence="2">
    <location>
        <begin position="35"/>
        <end position="55"/>
    </location>
</feature>
<evidence type="ECO:0000250" key="1">
    <source>
        <dbReference type="UniProtKB" id="P47081"/>
    </source>
</evidence>
<evidence type="ECO:0000255" key="2"/>
<evidence type="ECO:0000305" key="3"/>
<proteinExistence type="inferred from homology"/>
<accession>Q6FW43</accession>
<name>COX16_CANGA</name>
<organism>
    <name type="scientific">Candida glabrata (strain ATCC 2001 / BCRC 20586 / JCM 3761 / NBRC 0622 / NRRL Y-65 / CBS 138)</name>
    <name type="common">Yeast</name>
    <name type="synonym">Nakaseomyces glabratus</name>
    <dbReference type="NCBI Taxonomy" id="284593"/>
    <lineage>
        <taxon>Eukaryota</taxon>
        <taxon>Fungi</taxon>
        <taxon>Dikarya</taxon>
        <taxon>Ascomycota</taxon>
        <taxon>Saccharomycotina</taxon>
        <taxon>Saccharomycetes</taxon>
        <taxon>Saccharomycetales</taxon>
        <taxon>Saccharomycetaceae</taxon>
        <taxon>Nakaseomyces</taxon>
    </lineage>
</organism>
<protein>
    <recommendedName>
        <fullName>Cytochrome c oxidase assembly protein COX16, mitochondrial</fullName>
    </recommendedName>
</protein>
<gene>
    <name type="primary">COX16</name>
    <name type="ordered locus">CAGL0D03102g</name>
</gene>
<keyword id="KW-0472">Membrane</keyword>
<keyword id="KW-0496">Mitochondrion</keyword>
<keyword id="KW-0999">Mitochondrion inner membrane</keyword>
<keyword id="KW-1185">Reference proteome</keyword>
<keyword id="KW-0809">Transit peptide</keyword>
<keyword id="KW-0812">Transmembrane</keyword>
<keyword id="KW-1133">Transmembrane helix</keyword>